<proteinExistence type="inferred from homology"/>
<accession>P54866</accession>
<reference key="1">
    <citation type="submission" date="1996-05" db="EMBL/GenBank/DDBJ databases">
        <authorList>
            <person name="George J.M."/>
            <person name="Siepka S.M."/>
            <person name="Jin H."/>
            <person name="Holloway C.C."/>
            <person name="Clayton D.F."/>
        </authorList>
    </citation>
    <scope>NUCLEOTIDE SEQUENCE [MRNA]</scope>
    <source>
        <strain>Wasserschlager</strain>
    </source>
</reference>
<name>NEUG_SERCA</name>
<protein>
    <recommendedName>
        <fullName>Neurogranin</fullName>
        <shortName>NG</shortName>
    </recommendedName>
    <alternativeName>
        <fullName>Canarigranin</fullName>
    </alternativeName>
</protein>
<organism>
    <name type="scientific">Serinus canaria</name>
    <name type="common">Island canary</name>
    <name type="synonym">Fringilla canaria</name>
    <dbReference type="NCBI Taxonomy" id="9135"/>
    <lineage>
        <taxon>Eukaryota</taxon>
        <taxon>Metazoa</taxon>
        <taxon>Chordata</taxon>
        <taxon>Craniata</taxon>
        <taxon>Vertebrata</taxon>
        <taxon>Euteleostomi</taxon>
        <taxon>Archelosauria</taxon>
        <taxon>Archosauria</taxon>
        <taxon>Dinosauria</taxon>
        <taxon>Saurischia</taxon>
        <taxon>Theropoda</taxon>
        <taxon>Coelurosauria</taxon>
        <taxon>Aves</taxon>
        <taxon>Neognathae</taxon>
        <taxon>Neoaves</taxon>
        <taxon>Telluraves</taxon>
        <taxon>Australaves</taxon>
        <taxon>Passeriformes</taxon>
        <taxon>Passeroidea</taxon>
        <taxon>Fringillidae</taxon>
        <taxon>Carduelinae</taxon>
        <taxon>Serinus</taxon>
    </lineage>
</organism>
<dbReference type="EMBL" id="U56726">
    <property type="protein sequence ID" value="AAB01224.1"/>
    <property type="molecule type" value="mRNA"/>
</dbReference>
<dbReference type="RefSeq" id="XP_009096054.1">
    <property type="nucleotide sequence ID" value="XM_009097806.4"/>
</dbReference>
<dbReference type="SMR" id="P54866"/>
<dbReference type="Ensembl" id="ENSSCAT00000026778.1">
    <property type="protein sequence ID" value="ENSSCAP00000024069.1"/>
    <property type="gene ID" value="ENSSCAG00000017228.1"/>
</dbReference>
<dbReference type="GeneID" id="103822794"/>
<dbReference type="KEGG" id="scan:103822794"/>
<dbReference type="CTD" id="4900"/>
<dbReference type="GeneTree" id="ENSGT00440000039324"/>
<dbReference type="OMA" id="RPQESAC"/>
<dbReference type="OrthoDB" id="252964at2759"/>
<dbReference type="Proteomes" id="UP000694409">
    <property type="component" value="Unassembled WGS sequence"/>
</dbReference>
<dbReference type="GO" id="GO:0005516">
    <property type="term" value="F:calmodulin binding"/>
    <property type="evidence" value="ECO:0007669"/>
    <property type="project" value="UniProtKB-KW"/>
</dbReference>
<dbReference type="CDD" id="cd23767">
    <property type="entry name" value="IQCD"/>
    <property type="match status" value="1"/>
</dbReference>
<dbReference type="Gene3D" id="1.20.5.190">
    <property type="match status" value="1"/>
</dbReference>
<dbReference type="InterPro" id="IPR000048">
    <property type="entry name" value="IQ_motif_EF-hand-BS"/>
</dbReference>
<dbReference type="PANTHER" id="PTHR10699">
    <property type="entry name" value="NEUROMODULIN"/>
    <property type="match status" value="1"/>
</dbReference>
<dbReference type="PANTHER" id="PTHR10699:SF16">
    <property type="entry name" value="SPERM SURFACE PROTEIN SP17"/>
    <property type="match status" value="1"/>
</dbReference>
<dbReference type="Pfam" id="PF00612">
    <property type="entry name" value="IQ"/>
    <property type="match status" value="1"/>
</dbReference>
<dbReference type="SMART" id="SM00015">
    <property type="entry name" value="IQ"/>
    <property type="match status" value="1"/>
</dbReference>
<dbReference type="PROSITE" id="PS50096">
    <property type="entry name" value="IQ"/>
    <property type="match status" value="1"/>
</dbReference>
<keyword id="KW-0112">Calmodulin-binding</keyword>
<keyword id="KW-0597">Phosphoprotein</keyword>
<keyword id="KW-1185">Reference proteome</keyword>
<feature type="chain" id="PRO_0000159594" description="Neurogranin">
    <location>
        <begin position="1"/>
        <end position="73"/>
    </location>
</feature>
<feature type="domain" description="IQ" evidence="2">
    <location>
        <begin position="26"/>
        <end position="55"/>
    </location>
</feature>
<feature type="region of interest" description="Disordered" evidence="3">
    <location>
        <begin position="47"/>
        <end position="73"/>
    </location>
</feature>
<feature type="compositionally biased region" description="Basic and acidic residues" evidence="3">
    <location>
        <begin position="47"/>
        <end position="59"/>
    </location>
</feature>
<feature type="modified residue" description="Phosphoserine; by PKC" evidence="1">
    <location>
        <position position="36"/>
    </location>
</feature>
<sequence>MDCCNEGACTKLDEDILDIPLDDPDANAAAAKIQASFRGHMTRKKIKGGEIDRKTKDAECANSTRGGDLRNGD</sequence>
<gene>
    <name type="primary">NRGN</name>
    <name type="synonym">HAT14</name>
</gene>
<comment type="function">
    <text evidence="1">Acts as a 'third messenger' substrate of protein kinase C-mediated molecular cascades during synaptic development and remodeling. Binds to calmodulin in the absence of calcium (By similarity).</text>
</comment>
<comment type="similarity">
    <text evidence="4">Belongs to the neurogranin family.</text>
</comment>
<evidence type="ECO:0000250" key="1"/>
<evidence type="ECO:0000255" key="2">
    <source>
        <dbReference type="PROSITE-ProRule" id="PRU00116"/>
    </source>
</evidence>
<evidence type="ECO:0000256" key="3">
    <source>
        <dbReference type="SAM" id="MobiDB-lite"/>
    </source>
</evidence>
<evidence type="ECO:0000305" key="4"/>